<evidence type="ECO:0000255" key="1">
    <source>
        <dbReference type="HAMAP-Rule" id="MF_01953"/>
    </source>
</evidence>
<sequence length="572" mass="61169">MATIGRRAYAEMFGPTAGDRLRLADTDLVVEVEADYTLRAGSYGEEVKFGGGKTIRDGMAQSQKTRAEGAMDTVMTNALIMDHWGIVKADIGLKGGRIAVIGKAGNPDTQPGVDMIIGPGTEIISCEGMIVTAGGIDSHIHFICPQQIEEALTSGVTTMLGGGTGPATGTFATTCTPGPWNIERMLQAADAFPMNLGFLGKGNASLPAALHEQINAGVIGLKLHEDWGTTPAAISNCLDVAEETDTQVAIHSDTLNESGFVENTIAATKGRTLCAFHTEGAGGGHAPDILRVVGEQNFLPSSTNPTMPYTVNTLDEHVDMLMVCHHLDAGIAEDLAFAESRIRKETIAAEDILHDLGAISMFSSDSQAMGRVGEVIIRTWQTAHKMKQQRGKLPGDSDRHDNFRAKRYISKYTINPAIAHGISHEVGSVEPGKWADLVVWKPAFFGIKPSVILKGGFIAMAAMGDPNASIPTPQPVHYRPMFGGFGGAIAKGSLTFVSQAGLNADIQKRFGLAKTLSAVKNIRGVRKQHMIHNDYAPKMEVDAQTYLVRADGLLLTCEPAVSLPMTQRYFLF</sequence>
<reference key="1">
    <citation type="journal article" date="2008" name="Appl. Environ. Microbiol.">
        <title>The genome of Polaromonas sp. strain JS666: insights into the evolution of a hydrocarbon- and xenobiotic-degrading bacterium, and features of relevance to biotechnology.</title>
        <authorList>
            <person name="Mattes T.E."/>
            <person name="Alexander A.K."/>
            <person name="Richardson P.M."/>
            <person name="Munk A.C."/>
            <person name="Han C.S."/>
            <person name="Stothard P."/>
            <person name="Coleman N.V."/>
        </authorList>
    </citation>
    <scope>NUCLEOTIDE SEQUENCE [LARGE SCALE GENOMIC DNA]</scope>
    <source>
        <strain>JS666 / ATCC BAA-500</strain>
    </source>
</reference>
<proteinExistence type="inferred from homology"/>
<name>URE1_POLSJ</name>
<protein>
    <recommendedName>
        <fullName evidence="1">Urease subunit alpha</fullName>
        <ecNumber evidence="1">3.5.1.5</ecNumber>
    </recommendedName>
    <alternativeName>
        <fullName evidence="1">Urea amidohydrolase subunit alpha</fullName>
    </alternativeName>
</protein>
<keyword id="KW-0963">Cytoplasm</keyword>
<keyword id="KW-0378">Hydrolase</keyword>
<keyword id="KW-0479">Metal-binding</keyword>
<keyword id="KW-0533">Nickel</keyword>
<keyword id="KW-1185">Reference proteome</keyword>
<dbReference type="EC" id="3.5.1.5" evidence="1"/>
<dbReference type="EMBL" id="CP000316">
    <property type="protein sequence ID" value="ABE43299.1"/>
    <property type="molecule type" value="Genomic_DNA"/>
</dbReference>
<dbReference type="RefSeq" id="WP_011482298.1">
    <property type="nucleotide sequence ID" value="NC_007948.1"/>
</dbReference>
<dbReference type="SMR" id="Q12DU3"/>
<dbReference type="STRING" id="296591.Bpro_1350"/>
<dbReference type="MEROPS" id="M38.982"/>
<dbReference type="KEGG" id="pol:Bpro_1350"/>
<dbReference type="eggNOG" id="COG0804">
    <property type="taxonomic scope" value="Bacteria"/>
</dbReference>
<dbReference type="HOGENOM" id="CLU_000980_0_0_4"/>
<dbReference type="OrthoDB" id="9802793at2"/>
<dbReference type="UniPathway" id="UPA00258">
    <property type="reaction ID" value="UER00370"/>
</dbReference>
<dbReference type="Proteomes" id="UP000001983">
    <property type="component" value="Chromosome"/>
</dbReference>
<dbReference type="GO" id="GO:0005737">
    <property type="term" value="C:cytoplasm"/>
    <property type="evidence" value="ECO:0007669"/>
    <property type="project" value="UniProtKB-SubCell"/>
</dbReference>
<dbReference type="GO" id="GO:0016151">
    <property type="term" value="F:nickel cation binding"/>
    <property type="evidence" value="ECO:0007669"/>
    <property type="project" value="UniProtKB-UniRule"/>
</dbReference>
<dbReference type="GO" id="GO:0009039">
    <property type="term" value="F:urease activity"/>
    <property type="evidence" value="ECO:0007669"/>
    <property type="project" value="UniProtKB-UniRule"/>
</dbReference>
<dbReference type="GO" id="GO:0043419">
    <property type="term" value="P:urea catabolic process"/>
    <property type="evidence" value="ECO:0007669"/>
    <property type="project" value="UniProtKB-UniRule"/>
</dbReference>
<dbReference type="CDD" id="cd00375">
    <property type="entry name" value="Urease_alpha"/>
    <property type="match status" value="1"/>
</dbReference>
<dbReference type="Gene3D" id="3.20.20.140">
    <property type="entry name" value="Metal-dependent hydrolases"/>
    <property type="match status" value="1"/>
</dbReference>
<dbReference type="Gene3D" id="2.30.40.10">
    <property type="entry name" value="Urease, subunit C, domain 1"/>
    <property type="match status" value="1"/>
</dbReference>
<dbReference type="HAMAP" id="MF_01953">
    <property type="entry name" value="Urease_alpha"/>
    <property type="match status" value="1"/>
</dbReference>
<dbReference type="InterPro" id="IPR006680">
    <property type="entry name" value="Amidohydro-rel"/>
</dbReference>
<dbReference type="InterPro" id="IPR011059">
    <property type="entry name" value="Metal-dep_hydrolase_composite"/>
</dbReference>
<dbReference type="InterPro" id="IPR032466">
    <property type="entry name" value="Metal_Hydrolase"/>
</dbReference>
<dbReference type="InterPro" id="IPR011612">
    <property type="entry name" value="Urease_alpha_N_dom"/>
</dbReference>
<dbReference type="InterPro" id="IPR050112">
    <property type="entry name" value="Urease_alpha_subunit"/>
</dbReference>
<dbReference type="InterPro" id="IPR017950">
    <property type="entry name" value="Urease_AS"/>
</dbReference>
<dbReference type="InterPro" id="IPR005848">
    <property type="entry name" value="Urease_asu"/>
</dbReference>
<dbReference type="InterPro" id="IPR017951">
    <property type="entry name" value="Urease_asu_c"/>
</dbReference>
<dbReference type="InterPro" id="IPR029754">
    <property type="entry name" value="Urease_Ni-bd"/>
</dbReference>
<dbReference type="NCBIfam" id="NF009685">
    <property type="entry name" value="PRK13206.1"/>
    <property type="match status" value="1"/>
</dbReference>
<dbReference type="NCBIfam" id="NF009686">
    <property type="entry name" value="PRK13207.1"/>
    <property type="match status" value="1"/>
</dbReference>
<dbReference type="NCBIfam" id="TIGR01792">
    <property type="entry name" value="urease_alph"/>
    <property type="match status" value="1"/>
</dbReference>
<dbReference type="PANTHER" id="PTHR43440">
    <property type="entry name" value="UREASE"/>
    <property type="match status" value="1"/>
</dbReference>
<dbReference type="PANTHER" id="PTHR43440:SF1">
    <property type="entry name" value="UREASE"/>
    <property type="match status" value="1"/>
</dbReference>
<dbReference type="Pfam" id="PF01979">
    <property type="entry name" value="Amidohydro_1"/>
    <property type="match status" value="1"/>
</dbReference>
<dbReference type="Pfam" id="PF00449">
    <property type="entry name" value="Urease_alpha"/>
    <property type="match status" value="1"/>
</dbReference>
<dbReference type="PRINTS" id="PR01752">
    <property type="entry name" value="UREASE"/>
</dbReference>
<dbReference type="SUPFAM" id="SSF51338">
    <property type="entry name" value="Composite domain of metallo-dependent hydrolases"/>
    <property type="match status" value="2"/>
</dbReference>
<dbReference type="SUPFAM" id="SSF51556">
    <property type="entry name" value="Metallo-dependent hydrolases"/>
    <property type="match status" value="1"/>
</dbReference>
<dbReference type="PROSITE" id="PS01120">
    <property type="entry name" value="UREASE_1"/>
    <property type="match status" value="1"/>
</dbReference>
<dbReference type="PROSITE" id="PS00145">
    <property type="entry name" value="UREASE_2"/>
    <property type="match status" value="1"/>
</dbReference>
<dbReference type="PROSITE" id="PS51368">
    <property type="entry name" value="UREASE_3"/>
    <property type="match status" value="1"/>
</dbReference>
<comment type="catalytic activity">
    <reaction evidence="1">
        <text>urea + 2 H2O + H(+) = hydrogencarbonate + 2 NH4(+)</text>
        <dbReference type="Rhea" id="RHEA:20557"/>
        <dbReference type="ChEBI" id="CHEBI:15377"/>
        <dbReference type="ChEBI" id="CHEBI:15378"/>
        <dbReference type="ChEBI" id="CHEBI:16199"/>
        <dbReference type="ChEBI" id="CHEBI:17544"/>
        <dbReference type="ChEBI" id="CHEBI:28938"/>
        <dbReference type="EC" id="3.5.1.5"/>
    </reaction>
</comment>
<comment type="cofactor">
    <cofactor evidence="1">
        <name>Ni cation</name>
        <dbReference type="ChEBI" id="CHEBI:25516"/>
    </cofactor>
    <text evidence="1">Binds 2 nickel ions per subunit.</text>
</comment>
<comment type="pathway">
    <text evidence="1">Nitrogen metabolism; urea degradation; CO(2) and NH(3) from urea (urease route): step 1/1.</text>
</comment>
<comment type="subunit">
    <text evidence="1">Heterotrimer of UreA (gamma), UreB (beta) and UreC (alpha) subunits. Three heterotrimers associate to form the active enzyme.</text>
</comment>
<comment type="subcellular location">
    <subcellularLocation>
        <location evidence="1">Cytoplasm</location>
    </subcellularLocation>
</comment>
<comment type="PTM">
    <text evidence="1">Carboxylation allows a single lysine to coordinate two nickel ions.</text>
</comment>
<comment type="similarity">
    <text evidence="1">Belongs to the metallo-dependent hydrolases superfamily. Urease alpha subunit family.</text>
</comment>
<accession>Q12DU3</accession>
<gene>
    <name evidence="1" type="primary">ureC</name>
    <name type="ordered locus">Bpro_1350</name>
</gene>
<organism>
    <name type="scientific">Polaromonas sp. (strain JS666 / ATCC BAA-500)</name>
    <dbReference type="NCBI Taxonomy" id="296591"/>
    <lineage>
        <taxon>Bacteria</taxon>
        <taxon>Pseudomonadati</taxon>
        <taxon>Pseudomonadota</taxon>
        <taxon>Betaproteobacteria</taxon>
        <taxon>Burkholderiales</taxon>
        <taxon>Comamonadaceae</taxon>
        <taxon>Polaromonas</taxon>
    </lineage>
</organism>
<feature type="chain" id="PRO_1000070678" description="Urease subunit alpha">
    <location>
        <begin position="1"/>
        <end position="572"/>
    </location>
</feature>
<feature type="domain" description="Urease" evidence="1">
    <location>
        <begin position="134"/>
        <end position="572"/>
    </location>
</feature>
<feature type="active site" description="Proton donor" evidence="1">
    <location>
        <position position="325"/>
    </location>
</feature>
<feature type="binding site" evidence="1">
    <location>
        <position position="139"/>
    </location>
    <ligand>
        <name>Ni(2+)</name>
        <dbReference type="ChEBI" id="CHEBI:49786"/>
        <label>1</label>
    </ligand>
</feature>
<feature type="binding site" evidence="1">
    <location>
        <position position="141"/>
    </location>
    <ligand>
        <name>Ni(2+)</name>
        <dbReference type="ChEBI" id="CHEBI:49786"/>
        <label>1</label>
    </ligand>
</feature>
<feature type="binding site" description="via carbamate group" evidence="1">
    <location>
        <position position="222"/>
    </location>
    <ligand>
        <name>Ni(2+)</name>
        <dbReference type="ChEBI" id="CHEBI:49786"/>
        <label>1</label>
    </ligand>
</feature>
<feature type="binding site" description="via carbamate group" evidence="1">
    <location>
        <position position="222"/>
    </location>
    <ligand>
        <name>Ni(2+)</name>
        <dbReference type="ChEBI" id="CHEBI:49786"/>
        <label>2</label>
    </ligand>
</feature>
<feature type="binding site" evidence="1">
    <location>
        <position position="224"/>
    </location>
    <ligand>
        <name>substrate</name>
    </ligand>
</feature>
<feature type="binding site" evidence="1">
    <location>
        <position position="251"/>
    </location>
    <ligand>
        <name>Ni(2+)</name>
        <dbReference type="ChEBI" id="CHEBI:49786"/>
        <label>2</label>
    </ligand>
</feature>
<feature type="binding site" evidence="1">
    <location>
        <position position="277"/>
    </location>
    <ligand>
        <name>Ni(2+)</name>
        <dbReference type="ChEBI" id="CHEBI:49786"/>
        <label>2</label>
    </ligand>
</feature>
<feature type="binding site" evidence="1">
    <location>
        <position position="365"/>
    </location>
    <ligand>
        <name>Ni(2+)</name>
        <dbReference type="ChEBI" id="CHEBI:49786"/>
        <label>1</label>
    </ligand>
</feature>
<feature type="modified residue" description="N6-carboxylysine" evidence="1">
    <location>
        <position position="222"/>
    </location>
</feature>